<dbReference type="EMBL" id="AE007869">
    <property type="protein sequence ID" value="AAK85869.1"/>
    <property type="molecule type" value="Genomic_DNA"/>
</dbReference>
<dbReference type="PIR" id="AF2582">
    <property type="entry name" value="AF2582"/>
</dbReference>
<dbReference type="PIR" id="D97364">
    <property type="entry name" value="D97364"/>
</dbReference>
<dbReference type="RefSeq" id="NP_353084.1">
    <property type="nucleotide sequence ID" value="NC_003062.2"/>
</dbReference>
<dbReference type="RefSeq" id="WP_010970624.1">
    <property type="nucleotide sequence ID" value="NC_003062.2"/>
</dbReference>
<dbReference type="SMR" id="Q8UJ87"/>
<dbReference type="STRING" id="176299.Atu0045"/>
<dbReference type="EnsemblBacteria" id="AAK85869">
    <property type="protein sequence ID" value="AAK85869"/>
    <property type="gene ID" value="Atu0045"/>
</dbReference>
<dbReference type="GeneID" id="1132083"/>
<dbReference type="KEGG" id="atu:Atu0045"/>
<dbReference type="PATRIC" id="fig|176299.10.peg.45"/>
<dbReference type="eggNOG" id="COG1220">
    <property type="taxonomic scope" value="Bacteria"/>
</dbReference>
<dbReference type="HOGENOM" id="CLU_033123_0_0_5"/>
<dbReference type="OrthoDB" id="9804062at2"/>
<dbReference type="PhylomeDB" id="Q8UJ87"/>
<dbReference type="BioCyc" id="AGRO:ATU0045-MONOMER"/>
<dbReference type="Proteomes" id="UP000000813">
    <property type="component" value="Chromosome circular"/>
</dbReference>
<dbReference type="GO" id="GO:0009376">
    <property type="term" value="C:HslUV protease complex"/>
    <property type="evidence" value="ECO:0007669"/>
    <property type="project" value="UniProtKB-UniRule"/>
</dbReference>
<dbReference type="GO" id="GO:0005524">
    <property type="term" value="F:ATP binding"/>
    <property type="evidence" value="ECO:0007669"/>
    <property type="project" value="UniProtKB-UniRule"/>
</dbReference>
<dbReference type="GO" id="GO:0016887">
    <property type="term" value="F:ATP hydrolysis activity"/>
    <property type="evidence" value="ECO:0007669"/>
    <property type="project" value="InterPro"/>
</dbReference>
<dbReference type="GO" id="GO:0008233">
    <property type="term" value="F:peptidase activity"/>
    <property type="evidence" value="ECO:0007669"/>
    <property type="project" value="InterPro"/>
</dbReference>
<dbReference type="GO" id="GO:0036402">
    <property type="term" value="F:proteasome-activating activity"/>
    <property type="evidence" value="ECO:0007669"/>
    <property type="project" value="UniProtKB-UniRule"/>
</dbReference>
<dbReference type="GO" id="GO:0043335">
    <property type="term" value="P:protein unfolding"/>
    <property type="evidence" value="ECO:0007669"/>
    <property type="project" value="UniProtKB-UniRule"/>
</dbReference>
<dbReference type="GO" id="GO:0051603">
    <property type="term" value="P:proteolysis involved in protein catabolic process"/>
    <property type="evidence" value="ECO:0007669"/>
    <property type="project" value="TreeGrafter"/>
</dbReference>
<dbReference type="CDD" id="cd19498">
    <property type="entry name" value="RecA-like_HslU"/>
    <property type="match status" value="1"/>
</dbReference>
<dbReference type="FunFam" id="3.40.50.300:FF:000213">
    <property type="entry name" value="ATP-dependent protease ATPase subunit HslU"/>
    <property type="match status" value="1"/>
</dbReference>
<dbReference type="FunFam" id="3.40.50.300:FF:000220">
    <property type="entry name" value="ATP-dependent protease ATPase subunit HslU"/>
    <property type="match status" value="1"/>
</dbReference>
<dbReference type="Gene3D" id="1.10.8.60">
    <property type="match status" value="1"/>
</dbReference>
<dbReference type="Gene3D" id="3.40.50.300">
    <property type="entry name" value="P-loop containing nucleotide triphosphate hydrolases"/>
    <property type="match status" value="2"/>
</dbReference>
<dbReference type="HAMAP" id="MF_00249">
    <property type="entry name" value="HslU"/>
    <property type="match status" value="1"/>
</dbReference>
<dbReference type="InterPro" id="IPR003593">
    <property type="entry name" value="AAA+_ATPase"/>
</dbReference>
<dbReference type="InterPro" id="IPR050052">
    <property type="entry name" value="ATP-dep_Clp_protease_ClpX"/>
</dbReference>
<dbReference type="InterPro" id="IPR003959">
    <property type="entry name" value="ATPase_AAA_core"/>
</dbReference>
<dbReference type="InterPro" id="IPR019489">
    <property type="entry name" value="Clp_ATPase_C"/>
</dbReference>
<dbReference type="InterPro" id="IPR004491">
    <property type="entry name" value="HslU"/>
</dbReference>
<dbReference type="InterPro" id="IPR027417">
    <property type="entry name" value="P-loop_NTPase"/>
</dbReference>
<dbReference type="NCBIfam" id="TIGR00390">
    <property type="entry name" value="hslU"/>
    <property type="match status" value="1"/>
</dbReference>
<dbReference type="NCBIfam" id="NF003544">
    <property type="entry name" value="PRK05201.1"/>
    <property type="match status" value="1"/>
</dbReference>
<dbReference type="PANTHER" id="PTHR48102">
    <property type="entry name" value="ATP-DEPENDENT CLP PROTEASE ATP-BINDING SUBUNIT CLPX-LIKE, MITOCHONDRIAL-RELATED"/>
    <property type="match status" value="1"/>
</dbReference>
<dbReference type="PANTHER" id="PTHR48102:SF3">
    <property type="entry name" value="ATP-DEPENDENT PROTEASE ATPASE SUBUNIT HSLU"/>
    <property type="match status" value="1"/>
</dbReference>
<dbReference type="Pfam" id="PF00004">
    <property type="entry name" value="AAA"/>
    <property type="match status" value="1"/>
</dbReference>
<dbReference type="Pfam" id="PF07724">
    <property type="entry name" value="AAA_2"/>
    <property type="match status" value="1"/>
</dbReference>
<dbReference type="SMART" id="SM00382">
    <property type="entry name" value="AAA"/>
    <property type="match status" value="1"/>
</dbReference>
<dbReference type="SMART" id="SM01086">
    <property type="entry name" value="ClpB_D2-small"/>
    <property type="match status" value="1"/>
</dbReference>
<dbReference type="SUPFAM" id="SSF52540">
    <property type="entry name" value="P-loop containing nucleoside triphosphate hydrolases"/>
    <property type="match status" value="1"/>
</dbReference>
<feature type="chain" id="PRO_0000160467" description="ATP-dependent protease ATPase subunit HslU">
    <location>
        <begin position="1"/>
        <end position="435"/>
    </location>
</feature>
<feature type="binding site" evidence="1">
    <location>
        <position position="18"/>
    </location>
    <ligand>
        <name>ATP</name>
        <dbReference type="ChEBI" id="CHEBI:30616"/>
    </ligand>
</feature>
<feature type="binding site" evidence="1">
    <location>
        <begin position="60"/>
        <end position="65"/>
    </location>
    <ligand>
        <name>ATP</name>
        <dbReference type="ChEBI" id="CHEBI:30616"/>
    </ligand>
</feature>
<feature type="binding site" evidence="1">
    <location>
        <position position="248"/>
    </location>
    <ligand>
        <name>ATP</name>
        <dbReference type="ChEBI" id="CHEBI:30616"/>
    </ligand>
</feature>
<feature type="binding site" evidence="1">
    <location>
        <position position="313"/>
    </location>
    <ligand>
        <name>ATP</name>
        <dbReference type="ChEBI" id="CHEBI:30616"/>
    </ligand>
</feature>
<feature type="binding site" evidence="1">
    <location>
        <position position="385"/>
    </location>
    <ligand>
        <name>ATP</name>
        <dbReference type="ChEBI" id="CHEBI:30616"/>
    </ligand>
</feature>
<name>HSLU_AGRFC</name>
<evidence type="ECO:0000255" key="1">
    <source>
        <dbReference type="HAMAP-Rule" id="MF_00249"/>
    </source>
</evidence>
<organism>
    <name type="scientific">Agrobacterium fabrum (strain C58 / ATCC 33970)</name>
    <name type="common">Agrobacterium tumefaciens (strain C58)</name>
    <dbReference type="NCBI Taxonomy" id="176299"/>
    <lineage>
        <taxon>Bacteria</taxon>
        <taxon>Pseudomonadati</taxon>
        <taxon>Pseudomonadota</taxon>
        <taxon>Alphaproteobacteria</taxon>
        <taxon>Hyphomicrobiales</taxon>
        <taxon>Rhizobiaceae</taxon>
        <taxon>Rhizobium/Agrobacterium group</taxon>
        <taxon>Agrobacterium</taxon>
        <taxon>Agrobacterium tumefaciens complex</taxon>
    </lineage>
</organism>
<accession>Q8UJ87</accession>
<reference key="1">
    <citation type="journal article" date="2001" name="Science">
        <title>The genome of the natural genetic engineer Agrobacterium tumefaciens C58.</title>
        <authorList>
            <person name="Wood D.W."/>
            <person name="Setubal J.C."/>
            <person name="Kaul R."/>
            <person name="Monks D.E."/>
            <person name="Kitajima J.P."/>
            <person name="Okura V.K."/>
            <person name="Zhou Y."/>
            <person name="Chen L."/>
            <person name="Wood G.E."/>
            <person name="Almeida N.F. Jr."/>
            <person name="Woo L."/>
            <person name="Chen Y."/>
            <person name="Paulsen I.T."/>
            <person name="Eisen J.A."/>
            <person name="Karp P.D."/>
            <person name="Bovee D. Sr."/>
            <person name="Chapman P."/>
            <person name="Clendenning J."/>
            <person name="Deatherage G."/>
            <person name="Gillet W."/>
            <person name="Grant C."/>
            <person name="Kutyavin T."/>
            <person name="Levy R."/>
            <person name="Li M.-J."/>
            <person name="McClelland E."/>
            <person name="Palmieri A."/>
            <person name="Raymond C."/>
            <person name="Rouse G."/>
            <person name="Saenphimmachak C."/>
            <person name="Wu Z."/>
            <person name="Romero P."/>
            <person name="Gordon D."/>
            <person name="Zhang S."/>
            <person name="Yoo H."/>
            <person name="Tao Y."/>
            <person name="Biddle P."/>
            <person name="Jung M."/>
            <person name="Krespan W."/>
            <person name="Perry M."/>
            <person name="Gordon-Kamm B."/>
            <person name="Liao L."/>
            <person name="Kim S."/>
            <person name="Hendrick C."/>
            <person name="Zhao Z.-Y."/>
            <person name="Dolan M."/>
            <person name="Chumley F."/>
            <person name="Tingey S.V."/>
            <person name="Tomb J.-F."/>
            <person name="Gordon M.P."/>
            <person name="Olson M.V."/>
            <person name="Nester E.W."/>
        </authorList>
    </citation>
    <scope>NUCLEOTIDE SEQUENCE [LARGE SCALE GENOMIC DNA]</scope>
    <source>
        <strain>C58 / ATCC 33970</strain>
    </source>
</reference>
<reference key="2">
    <citation type="journal article" date="2001" name="Science">
        <title>Genome sequence of the plant pathogen and biotechnology agent Agrobacterium tumefaciens C58.</title>
        <authorList>
            <person name="Goodner B."/>
            <person name="Hinkle G."/>
            <person name="Gattung S."/>
            <person name="Miller N."/>
            <person name="Blanchard M."/>
            <person name="Qurollo B."/>
            <person name="Goldman B.S."/>
            <person name="Cao Y."/>
            <person name="Askenazi M."/>
            <person name="Halling C."/>
            <person name="Mullin L."/>
            <person name="Houmiel K."/>
            <person name="Gordon J."/>
            <person name="Vaudin M."/>
            <person name="Iartchouk O."/>
            <person name="Epp A."/>
            <person name="Liu F."/>
            <person name="Wollam C."/>
            <person name="Allinger M."/>
            <person name="Doughty D."/>
            <person name="Scott C."/>
            <person name="Lappas C."/>
            <person name="Markelz B."/>
            <person name="Flanagan C."/>
            <person name="Crowell C."/>
            <person name="Gurson J."/>
            <person name="Lomo C."/>
            <person name="Sear C."/>
            <person name="Strub G."/>
            <person name="Cielo C."/>
            <person name="Slater S."/>
        </authorList>
    </citation>
    <scope>NUCLEOTIDE SEQUENCE [LARGE SCALE GENOMIC DNA]</scope>
    <source>
        <strain>C58 / ATCC 33970</strain>
    </source>
</reference>
<sequence length="435" mass="47997">MTTFSPREIVSELDRHIIGQHDAKRAVAIALRNRWRRQQLDESLRDEVMPKNILMIGPTGVGKTEISRRLAKLAGAPFIKVEATKFTEVGYVGRDVEQIIRDLVEIGIGLVREKKRAEVQAKAHQSAEERVLDALVGSTASPGTRESFRKKLRDGELDDKEIDIEVADSGSGMPGFEIPGMPGANIGVLNLSEMFGKAMGGRTKKVRTTVSKSYTDLVRDESDKLLDNEMIQREAVKSVENDGIVFLDEIDKIAARDGGMGAGVSREGVQRDLLPLVEGTTVSTKYGPVKTDHVLFIASGAFHVAKPSDLLPELQGRLPIRVELKPLTKEDFRRILTETEASLIRQYKALMATEELDLDFTDDAIDALADVAVHLNSSVENIGARRLQTVMERVLDEISFNAPDRGGSAVKIDQEYVKKHVGDLAADTDLSRYIL</sequence>
<keyword id="KW-0067">ATP-binding</keyword>
<keyword id="KW-0143">Chaperone</keyword>
<keyword id="KW-0963">Cytoplasm</keyword>
<keyword id="KW-0547">Nucleotide-binding</keyword>
<keyword id="KW-1185">Reference proteome</keyword>
<proteinExistence type="inferred from homology"/>
<protein>
    <recommendedName>
        <fullName evidence="1">ATP-dependent protease ATPase subunit HslU</fullName>
    </recommendedName>
    <alternativeName>
        <fullName evidence="1">Unfoldase HslU</fullName>
    </alternativeName>
</protein>
<comment type="function">
    <text evidence="1">ATPase subunit of a proteasome-like degradation complex; this subunit has chaperone activity. The binding of ATP and its subsequent hydrolysis by HslU are essential for unfolding of protein substrates subsequently hydrolyzed by HslV. HslU recognizes the N-terminal part of its protein substrates and unfolds these before they are guided to HslV for hydrolysis.</text>
</comment>
<comment type="subunit">
    <text evidence="1">A double ring-shaped homohexamer of HslV is capped on each side by a ring-shaped HslU homohexamer. The assembly of the HslU/HslV complex is dependent on binding of ATP.</text>
</comment>
<comment type="subcellular location">
    <subcellularLocation>
        <location evidence="1">Cytoplasm</location>
    </subcellularLocation>
</comment>
<comment type="similarity">
    <text evidence="1">Belongs to the ClpX chaperone family. HslU subfamily.</text>
</comment>
<gene>
    <name evidence="1" type="primary">hslU</name>
    <name type="ordered locus">Atu0045</name>
    <name type="ORF">AGR_C_72</name>
</gene>